<name>LRP5_MOUSE</name>
<dbReference type="EMBL" id="AF064984">
    <property type="protein sequence ID" value="AAC36468.1"/>
    <property type="molecule type" value="mRNA"/>
</dbReference>
<dbReference type="EMBL" id="AF077847">
    <property type="protein sequence ID" value="AAC70183.1"/>
    <property type="molecule type" value="mRNA"/>
</dbReference>
<dbReference type="EMBL" id="AC112990">
    <property type="status" value="NOT_ANNOTATED_CDS"/>
    <property type="molecule type" value="Genomic_DNA"/>
</dbReference>
<dbReference type="EMBL" id="AC117797">
    <property type="status" value="NOT_ANNOTATED_CDS"/>
    <property type="molecule type" value="Genomic_DNA"/>
</dbReference>
<dbReference type="EMBL" id="BC011374">
    <property type="protein sequence ID" value="AAH11374.1"/>
    <property type="molecule type" value="mRNA"/>
</dbReference>
<dbReference type="CCDS" id="CCDS37881.1">
    <molecule id="Q91VN0-1"/>
</dbReference>
<dbReference type="RefSeq" id="NP_032539.2">
    <molecule id="Q91VN0-1"/>
    <property type="nucleotide sequence ID" value="NM_008513.3"/>
</dbReference>
<dbReference type="SMR" id="Q91VN0"/>
<dbReference type="BioGRID" id="201202">
    <property type="interactions" value="12"/>
</dbReference>
<dbReference type="CORUM" id="Q91VN0"/>
<dbReference type="FunCoup" id="Q91VN0">
    <property type="interactions" value="527"/>
</dbReference>
<dbReference type="IntAct" id="Q91VN0">
    <property type="interactions" value="2"/>
</dbReference>
<dbReference type="MINT" id="Q91VN0"/>
<dbReference type="STRING" id="10090.ENSMUSP00000025856"/>
<dbReference type="ChEMBL" id="CHEMBL4296099"/>
<dbReference type="GlyCosmos" id="Q91VN0">
    <property type="glycosylation" value="6 sites, No reported glycans"/>
</dbReference>
<dbReference type="GlyGen" id="Q91VN0">
    <property type="glycosylation" value="9 sites, 1 N-linked glycan (3 sites), 1 O-linked glycan (1 site)"/>
</dbReference>
<dbReference type="iPTMnet" id="Q91VN0"/>
<dbReference type="PhosphoSitePlus" id="Q91VN0"/>
<dbReference type="jPOST" id="Q91VN0"/>
<dbReference type="PaxDb" id="10090-ENSMUSP00000025856"/>
<dbReference type="ProteomicsDB" id="287274">
    <molecule id="Q91VN0-1"/>
</dbReference>
<dbReference type="Pumba" id="Q91VN0"/>
<dbReference type="Antibodypedia" id="4572">
    <property type="antibodies" value="424 antibodies from 36 providers"/>
</dbReference>
<dbReference type="DNASU" id="16973"/>
<dbReference type="Ensembl" id="ENSMUST00000025856.17">
    <molecule id="Q91VN0-1"/>
    <property type="protein sequence ID" value="ENSMUSP00000025856.11"/>
    <property type="gene ID" value="ENSMUSG00000024913.17"/>
</dbReference>
<dbReference type="GeneID" id="16973"/>
<dbReference type="KEGG" id="mmu:16973"/>
<dbReference type="UCSC" id="uc008fwq.2">
    <molecule id="Q91VN0-1"/>
    <property type="organism name" value="mouse"/>
</dbReference>
<dbReference type="AGR" id="MGI:1278315"/>
<dbReference type="CTD" id="4041"/>
<dbReference type="MGI" id="MGI:1278315">
    <property type="gene designation" value="Lrp5"/>
</dbReference>
<dbReference type="VEuPathDB" id="HostDB:ENSMUSG00000024913"/>
<dbReference type="eggNOG" id="KOG1215">
    <property type="taxonomic scope" value="Eukaryota"/>
</dbReference>
<dbReference type="GeneTree" id="ENSGT00940000156574"/>
<dbReference type="HOGENOM" id="CLU_002489_0_0_1"/>
<dbReference type="InParanoid" id="Q91VN0"/>
<dbReference type="OMA" id="AIKQTRW"/>
<dbReference type="OrthoDB" id="72419at2759"/>
<dbReference type="PhylomeDB" id="Q91VN0"/>
<dbReference type="TreeFam" id="TF315253"/>
<dbReference type="Reactome" id="R-MMU-3772470">
    <property type="pathway name" value="Negative regulation of TCF-dependent signaling by WNT ligand antagonists"/>
</dbReference>
<dbReference type="Reactome" id="R-MMU-4641262">
    <property type="pathway name" value="Disassembly of the destruction complex and recruitment of AXIN to the membrane"/>
</dbReference>
<dbReference type="Reactome" id="R-MMU-4641263">
    <property type="pathway name" value="Regulation of FZD by ubiquitination"/>
</dbReference>
<dbReference type="BioGRID-ORCS" id="16973">
    <property type="hits" value="2 hits in 80 CRISPR screens"/>
</dbReference>
<dbReference type="ChiTaRS" id="Lrp5">
    <property type="organism name" value="mouse"/>
</dbReference>
<dbReference type="PRO" id="PR:Q91VN0"/>
<dbReference type="Proteomes" id="UP000000589">
    <property type="component" value="Chromosome 19"/>
</dbReference>
<dbReference type="RNAct" id="Q91VN0">
    <property type="molecule type" value="protein"/>
</dbReference>
<dbReference type="Bgee" id="ENSMUSG00000024913">
    <property type="expression patterns" value="Expressed in epithelium of urethra and 166 other cell types or tissues"/>
</dbReference>
<dbReference type="ExpressionAtlas" id="Q91VN0">
    <property type="expression patterns" value="baseline and differential"/>
</dbReference>
<dbReference type="GO" id="GO:0005783">
    <property type="term" value="C:endoplasmic reticulum"/>
    <property type="evidence" value="ECO:0007669"/>
    <property type="project" value="UniProtKB-SubCell"/>
</dbReference>
<dbReference type="GO" id="GO:0005739">
    <property type="term" value="C:mitochondrion"/>
    <property type="evidence" value="ECO:0007005"/>
    <property type="project" value="MGI"/>
</dbReference>
<dbReference type="GO" id="GO:0005886">
    <property type="term" value="C:plasma membrane"/>
    <property type="evidence" value="ECO:0007669"/>
    <property type="project" value="Ensembl"/>
</dbReference>
<dbReference type="GO" id="GO:0043235">
    <property type="term" value="C:receptor complex"/>
    <property type="evidence" value="ECO:0007669"/>
    <property type="project" value="Ensembl"/>
</dbReference>
<dbReference type="GO" id="GO:0015026">
    <property type="term" value="F:coreceptor activity"/>
    <property type="evidence" value="ECO:0007669"/>
    <property type="project" value="Ensembl"/>
</dbReference>
<dbReference type="GO" id="GO:0042813">
    <property type="term" value="F:Wnt receptor activity"/>
    <property type="evidence" value="ECO:0000314"/>
    <property type="project" value="MGI"/>
</dbReference>
<dbReference type="GO" id="GO:0017147">
    <property type="term" value="F:Wnt-protein binding"/>
    <property type="evidence" value="ECO:0000353"/>
    <property type="project" value="MGI"/>
</dbReference>
<dbReference type="GO" id="GO:0060612">
    <property type="term" value="P:adipose tissue development"/>
    <property type="evidence" value="ECO:0007669"/>
    <property type="project" value="Ensembl"/>
</dbReference>
<dbReference type="GO" id="GO:0006865">
    <property type="term" value="P:amino acid transport"/>
    <property type="evidence" value="ECO:0000315"/>
    <property type="project" value="MGI"/>
</dbReference>
<dbReference type="GO" id="GO:0060033">
    <property type="term" value="P:anatomical structure regression"/>
    <property type="evidence" value="ECO:0000315"/>
    <property type="project" value="MGI"/>
</dbReference>
<dbReference type="GO" id="GO:0009952">
    <property type="term" value="P:anterior/posterior pattern specification"/>
    <property type="evidence" value="ECO:0000316"/>
    <property type="project" value="MGI"/>
</dbReference>
<dbReference type="GO" id="GO:1902262">
    <property type="term" value="P:apoptotic process involved in blood vessel morphogenesis"/>
    <property type="evidence" value="ECO:0000315"/>
    <property type="project" value="MGI"/>
</dbReference>
<dbReference type="GO" id="GO:0048514">
    <property type="term" value="P:blood vessel morphogenesis"/>
    <property type="evidence" value="ECO:0000315"/>
    <property type="project" value="MGI"/>
</dbReference>
<dbReference type="GO" id="GO:0060348">
    <property type="term" value="P:bone development"/>
    <property type="evidence" value="ECO:0000315"/>
    <property type="project" value="BHF-UCL"/>
</dbReference>
<dbReference type="GO" id="GO:0048539">
    <property type="term" value="P:bone marrow development"/>
    <property type="evidence" value="ECO:0007669"/>
    <property type="project" value="Ensembl"/>
</dbReference>
<dbReference type="GO" id="GO:0060349">
    <property type="term" value="P:bone morphogenesis"/>
    <property type="evidence" value="ECO:0007669"/>
    <property type="project" value="Ensembl"/>
</dbReference>
<dbReference type="GO" id="GO:0046849">
    <property type="term" value="P:bone remodeling"/>
    <property type="evidence" value="ECO:0000315"/>
    <property type="project" value="MGI"/>
</dbReference>
<dbReference type="GO" id="GO:0060444">
    <property type="term" value="P:branching involved in mammary gland duct morphogenesis"/>
    <property type="evidence" value="ECO:0000315"/>
    <property type="project" value="MGI"/>
</dbReference>
<dbReference type="GO" id="GO:0060070">
    <property type="term" value="P:canonical Wnt signaling pathway"/>
    <property type="evidence" value="ECO:0000314"/>
    <property type="project" value="MGI"/>
</dbReference>
<dbReference type="GO" id="GO:0042074">
    <property type="term" value="P:cell migration involved in gastrulation"/>
    <property type="evidence" value="ECO:0000316"/>
    <property type="project" value="MGI"/>
</dbReference>
<dbReference type="GO" id="GO:0098609">
    <property type="term" value="P:cell-cell adhesion"/>
    <property type="evidence" value="ECO:0000315"/>
    <property type="project" value="MGI"/>
</dbReference>
<dbReference type="GO" id="GO:0060764">
    <property type="term" value="P:cell-cell signaling involved in mammary gland development"/>
    <property type="evidence" value="ECO:0000315"/>
    <property type="project" value="MGI"/>
</dbReference>
<dbReference type="GO" id="GO:0042632">
    <property type="term" value="P:cholesterol homeostasis"/>
    <property type="evidence" value="ECO:0007669"/>
    <property type="project" value="Ensembl"/>
</dbReference>
<dbReference type="GO" id="GO:0008203">
    <property type="term" value="P:cholesterol metabolic process"/>
    <property type="evidence" value="ECO:0000315"/>
    <property type="project" value="MGI"/>
</dbReference>
<dbReference type="GO" id="GO:0042733">
    <property type="term" value="P:embryonic digit morphogenesis"/>
    <property type="evidence" value="ECO:0000316"/>
    <property type="project" value="MGI"/>
</dbReference>
<dbReference type="GO" id="GO:0006897">
    <property type="term" value="P:endocytosis"/>
    <property type="evidence" value="ECO:0007669"/>
    <property type="project" value="UniProtKB-KW"/>
</dbReference>
<dbReference type="GO" id="GO:0060856">
    <property type="term" value="P:establishment of blood-brain barrier"/>
    <property type="evidence" value="ECO:0000315"/>
    <property type="project" value="MGI"/>
</dbReference>
<dbReference type="GO" id="GO:1990963">
    <property type="term" value="P:establishment of blood-retinal barrier"/>
    <property type="evidence" value="ECO:0000315"/>
    <property type="project" value="MGI"/>
</dbReference>
<dbReference type="GO" id="GO:0035426">
    <property type="term" value="P:extracellular matrix-cell signaling"/>
    <property type="evidence" value="ECO:0000314"/>
    <property type="project" value="BHF-UCL"/>
</dbReference>
<dbReference type="GO" id="GO:0001702">
    <property type="term" value="P:gastrulation with mouth forming second"/>
    <property type="evidence" value="ECO:0000316"/>
    <property type="project" value="MGI"/>
</dbReference>
<dbReference type="GO" id="GO:0010467">
    <property type="term" value="P:gene expression"/>
    <property type="evidence" value="ECO:0000315"/>
    <property type="project" value="MGI"/>
</dbReference>
<dbReference type="GO" id="GO:0006007">
    <property type="term" value="P:glucose catabolic process"/>
    <property type="evidence" value="ECO:0007669"/>
    <property type="project" value="Ensembl"/>
</dbReference>
<dbReference type="GO" id="GO:0035108">
    <property type="term" value="P:limb morphogenesis"/>
    <property type="evidence" value="ECO:0000316"/>
    <property type="project" value="MGI"/>
</dbReference>
<dbReference type="GO" id="GO:0060603">
    <property type="term" value="P:mammary gland duct morphogenesis"/>
    <property type="evidence" value="ECO:0000316"/>
    <property type="project" value="MGI"/>
</dbReference>
<dbReference type="GO" id="GO:0008078">
    <property type="term" value="P:mesodermal cell migration"/>
    <property type="evidence" value="ECO:0000316"/>
    <property type="project" value="MGI"/>
</dbReference>
<dbReference type="GO" id="GO:0045668">
    <property type="term" value="P:negative regulation of osteoblast differentiation"/>
    <property type="evidence" value="ECO:0007669"/>
    <property type="project" value="Ensembl"/>
</dbReference>
<dbReference type="GO" id="GO:0110135">
    <property type="term" value="P:Norrin signaling pathway"/>
    <property type="evidence" value="ECO:0000314"/>
    <property type="project" value="BHF-UCL"/>
</dbReference>
<dbReference type="GO" id="GO:0002076">
    <property type="term" value="P:osteoblast development"/>
    <property type="evidence" value="ECO:0000315"/>
    <property type="project" value="BHF-UCL"/>
</dbReference>
<dbReference type="GO" id="GO:0033687">
    <property type="term" value="P:osteoblast proliferation"/>
    <property type="evidence" value="ECO:0000315"/>
    <property type="project" value="MGI"/>
</dbReference>
<dbReference type="GO" id="GO:0045600">
    <property type="term" value="P:positive regulation of fat cell differentiation"/>
    <property type="evidence" value="ECO:0007669"/>
    <property type="project" value="Ensembl"/>
</dbReference>
<dbReference type="GO" id="GO:0002053">
    <property type="term" value="P:positive regulation of mesenchymal cell proliferation"/>
    <property type="evidence" value="ECO:0007669"/>
    <property type="project" value="Ensembl"/>
</dbReference>
<dbReference type="GO" id="GO:0045840">
    <property type="term" value="P:positive regulation of mitotic nuclear division"/>
    <property type="evidence" value="ECO:0007669"/>
    <property type="project" value="Ensembl"/>
</dbReference>
<dbReference type="GO" id="GO:0045669">
    <property type="term" value="P:positive regulation of osteoblast differentiation"/>
    <property type="evidence" value="ECO:0000315"/>
    <property type="project" value="BHF-UCL"/>
</dbReference>
<dbReference type="GO" id="GO:0033690">
    <property type="term" value="P:positive regulation of osteoblast proliferation"/>
    <property type="evidence" value="ECO:0000315"/>
    <property type="project" value="MGI"/>
</dbReference>
<dbReference type="GO" id="GO:0045944">
    <property type="term" value="P:positive regulation of transcription by RNA polymerase II"/>
    <property type="evidence" value="ECO:0000314"/>
    <property type="project" value="BHF-UCL"/>
</dbReference>
<dbReference type="GO" id="GO:0042981">
    <property type="term" value="P:regulation of apoptotic process"/>
    <property type="evidence" value="ECO:0000315"/>
    <property type="project" value="MGI"/>
</dbReference>
<dbReference type="GO" id="GO:0008217">
    <property type="term" value="P:regulation of blood pressure"/>
    <property type="evidence" value="ECO:0007669"/>
    <property type="project" value="Ensembl"/>
</dbReference>
<dbReference type="GO" id="GO:0061178">
    <property type="term" value="P:regulation of insulin secretion involved in cellular response to glucose stimulus"/>
    <property type="evidence" value="ECO:0000315"/>
    <property type="project" value="MGI"/>
</dbReference>
<dbReference type="GO" id="GO:0043434">
    <property type="term" value="P:response to peptide hormone"/>
    <property type="evidence" value="ECO:0007669"/>
    <property type="project" value="Ensembl"/>
</dbReference>
<dbReference type="GO" id="GO:0060042">
    <property type="term" value="P:retina morphogenesis in camera-type eye"/>
    <property type="evidence" value="ECO:0007669"/>
    <property type="project" value="Ensembl"/>
</dbReference>
<dbReference type="GO" id="GO:0061298">
    <property type="term" value="P:retina vasculature development in camera-type eye"/>
    <property type="evidence" value="ECO:0000315"/>
    <property type="project" value="MGI"/>
</dbReference>
<dbReference type="GO" id="GO:0061299">
    <property type="term" value="P:retina vasculature morphogenesis in camera-type eye"/>
    <property type="evidence" value="ECO:0000315"/>
    <property type="project" value="MGI"/>
</dbReference>
<dbReference type="GO" id="GO:0061304">
    <property type="term" value="P:retinal blood vessel morphogenesis"/>
    <property type="evidence" value="ECO:0000315"/>
    <property type="project" value="CACAO"/>
</dbReference>
<dbReference type="GO" id="GO:0035019">
    <property type="term" value="P:somatic stem cell population maintenance"/>
    <property type="evidence" value="ECO:0000315"/>
    <property type="project" value="MGI"/>
</dbReference>
<dbReference type="GO" id="GO:0001944">
    <property type="term" value="P:vasculature development"/>
    <property type="evidence" value="ECO:0000315"/>
    <property type="project" value="MGI"/>
</dbReference>
<dbReference type="GO" id="GO:0016055">
    <property type="term" value="P:Wnt signaling pathway"/>
    <property type="evidence" value="ECO:0000315"/>
    <property type="project" value="MGI"/>
</dbReference>
<dbReference type="CDD" id="cd00112">
    <property type="entry name" value="LDLa"/>
    <property type="match status" value="3"/>
</dbReference>
<dbReference type="FunFam" id="2.120.10.30:FF:000162">
    <property type="entry name" value="LDL receptor related protein 5 like"/>
    <property type="match status" value="1"/>
</dbReference>
<dbReference type="FunFam" id="2.10.25.10:FF:000314">
    <property type="entry name" value="Low-density lipoprotein receptor-related protein"/>
    <property type="match status" value="1"/>
</dbReference>
<dbReference type="FunFam" id="2.120.10.30:FF:000024">
    <property type="entry name" value="Low-density lipoprotein receptor-related protein"/>
    <property type="match status" value="1"/>
</dbReference>
<dbReference type="FunFam" id="4.10.400.10:FF:000076">
    <property type="entry name" value="Low-density lipoprotein receptor-related protein"/>
    <property type="match status" value="1"/>
</dbReference>
<dbReference type="FunFam" id="4.10.400.10:FF:000095">
    <property type="entry name" value="Low-density lipoprotein receptor-related protein"/>
    <property type="match status" value="1"/>
</dbReference>
<dbReference type="FunFam" id="2.120.10.30:FF:000001">
    <property type="entry name" value="Low-density lipoprotein receptor-related protein 6"/>
    <property type="match status" value="1"/>
</dbReference>
<dbReference type="FunFam" id="2.120.10.30:FF:000017">
    <property type="entry name" value="Low-density lipoprotein receptor-related protein 6"/>
    <property type="match status" value="1"/>
</dbReference>
<dbReference type="FunFam" id="4.10.400.10:FF:000016">
    <property type="entry name" value="Low-density lipoprotein receptor-related protein 6"/>
    <property type="match status" value="1"/>
</dbReference>
<dbReference type="Gene3D" id="2.10.25.10">
    <property type="entry name" value="Laminin"/>
    <property type="match status" value="1"/>
</dbReference>
<dbReference type="Gene3D" id="4.10.400.10">
    <property type="entry name" value="Low-density Lipoprotein Receptor"/>
    <property type="match status" value="3"/>
</dbReference>
<dbReference type="Gene3D" id="2.120.10.30">
    <property type="entry name" value="TolB, C-terminal domain"/>
    <property type="match status" value="4"/>
</dbReference>
<dbReference type="InterPro" id="IPR011042">
    <property type="entry name" value="6-blade_b-propeller_TolB-like"/>
</dbReference>
<dbReference type="InterPro" id="IPR050778">
    <property type="entry name" value="Cueball_EGF_LRP_Nidogen"/>
</dbReference>
<dbReference type="InterPro" id="IPR000742">
    <property type="entry name" value="EGF-like_dom"/>
</dbReference>
<dbReference type="InterPro" id="IPR036055">
    <property type="entry name" value="LDL_receptor-like_sf"/>
</dbReference>
<dbReference type="InterPro" id="IPR023415">
    <property type="entry name" value="LDLR_class-A_CS"/>
</dbReference>
<dbReference type="InterPro" id="IPR000033">
    <property type="entry name" value="LDLR_classB_rpt"/>
</dbReference>
<dbReference type="InterPro" id="IPR002172">
    <property type="entry name" value="LDrepeatLR_classA_rpt"/>
</dbReference>
<dbReference type="InterPro" id="IPR017049">
    <property type="entry name" value="LRP5/6"/>
</dbReference>
<dbReference type="PANTHER" id="PTHR46513:SF16">
    <property type="entry name" value="LOW-DENSITY LIPOPROTEIN RECEPTOR-RELATED PROTEIN 5"/>
    <property type="match status" value="1"/>
</dbReference>
<dbReference type="PANTHER" id="PTHR46513">
    <property type="entry name" value="VITELLOGENIN RECEPTOR-LIKE PROTEIN-RELATED-RELATED"/>
    <property type="match status" value="1"/>
</dbReference>
<dbReference type="Pfam" id="PF14670">
    <property type="entry name" value="FXa_inhibition"/>
    <property type="match status" value="3"/>
</dbReference>
<dbReference type="Pfam" id="PF00057">
    <property type="entry name" value="Ldl_recept_a"/>
    <property type="match status" value="3"/>
</dbReference>
<dbReference type="Pfam" id="PF00058">
    <property type="entry name" value="Ldl_recept_b"/>
    <property type="match status" value="13"/>
</dbReference>
<dbReference type="PIRSF" id="PIRSF036314">
    <property type="entry name" value="LDL_recpt-rel_p5/6"/>
    <property type="match status" value="1"/>
</dbReference>
<dbReference type="PRINTS" id="PR00261">
    <property type="entry name" value="LDLRECEPTOR"/>
</dbReference>
<dbReference type="SMART" id="SM00181">
    <property type="entry name" value="EGF"/>
    <property type="match status" value="4"/>
</dbReference>
<dbReference type="SMART" id="SM00192">
    <property type="entry name" value="LDLa"/>
    <property type="match status" value="3"/>
</dbReference>
<dbReference type="SMART" id="SM00135">
    <property type="entry name" value="LY"/>
    <property type="match status" value="20"/>
</dbReference>
<dbReference type="SUPFAM" id="SSF57196">
    <property type="entry name" value="EGF/Laminin"/>
    <property type="match status" value="4"/>
</dbReference>
<dbReference type="SUPFAM" id="SSF57424">
    <property type="entry name" value="LDL receptor-like module"/>
    <property type="match status" value="3"/>
</dbReference>
<dbReference type="SUPFAM" id="SSF63825">
    <property type="entry name" value="YWTD domain"/>
    <property type="match status" value="4"/>
</dbReference>
<dbReference type="PROSITE" id="PS01209">
    <property type="entry name" value="LDLRA_1"/>
    <property type="match status" value="3"/>
</dbReference>
<dbReference type="PROSITE" id="PS50068">
    <property type="entry name" value="LDLRA_2"/>
    <property type="match status" value="3"/>
</dbReference>
<dbReference type="PROSITE" id="PS51120">
    <property type="entry name" value="LDLRB"/>
    <property type="match status" value="20"/>
</dbReference>
<sequence>METAPTRAPPPPPPPLLLLVLYCSLVPAAASPLLLFANRRDVRLVDAGGVKLESTIVASGLEDAAAVDFQFSKGAVYWTDVSEEAIKQTYLNQTGAAAQNIVISGLVSPDGLACDWVGKKLYWTDSETNRIEVANLNGTSRKVLFWQDLDQPRAIALDPAHGYMYWTDWGEAPRIERAGMDGSTRKIIVDSDIYWPNGLTIDLEEQKLYWADAKLSFIHRANLDGSFRQKVVEGSLTHPFALTLSGDTLYWTDWQTRSIHACNKWTGEQRKEILSALYSPMDIQVLSQERQPPFHTPCEEDNGGCSHLCLLSPREPFYSCACPTGVQLQDNGKTCKTGAEEVLLLARRTDLRRISLDTPDFTDIVLQVGDIRHAIAIDYDPLEGYVYWTDDEVRAIRRAYLDGSGAQTLVNTEINDPDGIAVDWVARNLYWTDTGTDRIEVTRLNGTSRKILVSEDLDEPRAIVLHPVMGLMYWTDWGENPKIECANLDGRDRHVLVNTSLGWPNGLALDLQEGKLYWGDAKTDKIEVINIDGTKRKTLLEDKLPHIFGFTLLGDFIYWTDWQRRSIERVHKVKASRDVIIDQLPDLMGLKAVNVAKVVGTNPCADGNGGCSHLCFFTPRATKCGCPIGLELLSDMKTCIIPEAFLVFTSRATIHRISLETNNNDVAIPLTGVKEASALDFDVSNNHIYWTDVSLKTISRAFMNGSSVEHVIEFGLDYPEGMAVDWMGKNLYWADTGTNRIEVARLDGQFRQVLVWRDLDNPRSLALDPTKGYIYWTEWGGKPRIVRAFMDGTNCMTLVDKVGRANDLTIDYADQRLYWTDLDTNMIESSNMLGQERMVIADDLPYPFGLTQYSDYIYWTDWNLHSIERADKTSGRNRTLIQGHLDFVMDILVFHSSRQDGLNDCVHSNGQCGQLCLAIPGGHRCGCASHYTLDPSSRNCSPPSTFLLFSQKFAISRMIPDDQLSPDLVLPLHGLRNVKAINYDPLDKFIYWVDGRQNIKRAKDDGTQPSMLTSPSQSLSPDRQPHDLSIDIYSRTLFWTCEATNTINVHRLDGDAMGVVLRGDRDKPRAIAVNAERGYMYFTNMQDHAAKIERASLDGTEREVLFTTGLIRPVALVVDNALGKLFWVDADLKRIESCDLSGANRLTLEDANIVQPVGLTVLGRHLYWIDRQQQMIERVEKTTGDKRTRVQGRVTHLTGIHAVEEVSLEEFSAHPCARDNGGCSHICIAKGDGTPRCSCPVHLVLLQNLLTCGEPPTCSPDQFACTTGEIDCIPGAWRCDGFPECADQSDEEGCPVCSASQFPCARGQCVDLRLRCDGEADCQDRSDEANCDAVCLPNQFRCTSGQCVLIKQQCDSFPDCADGSDELMCEINKPPSDDIPAHSSAIGPVIGIILSLFVMGGVYFVCQRVMCQRYTGASGPFPHEYVGGAPHVPLNFIAPGGSQHGPFPGIPCSKSVMSSMSLVGGRGSVPLYDRNHVTGASSSSSSSTKATLYPPILNPPPSPATDPSLYNVDVFYSSGIPATARPYRPYVIRGMAPPTTPCSTDVCDSDYSTSRWKSSKYYLDLNSDSDPYPPPPTPHSQYLSAEDSCPPSPGTERSYCHLFPPPPSPCTDSS</sequence>
<organism>
    <name type="scientific">Mus musculus</name>
    <name type="common">Mouse</name>
    <dbReference type="NCBI Taxonomy" id="10090"/>
    <lineage>
        <taxon>Eukaryota</taxon>
        <taxon>Metazoa</taxon>
        <taxon>Chordata</taxon>
        <taxon>Craniata</taxon>
        <taxon>Vertebrata</taxon>
        <taxon>Euteleostomi</taxon>
        <taxon>Mammalia</taxon>
        <taxon>Eutheria</taxon>
        <taxon>Euarchontoglires</taxon>
        <taxon>Glires</taxon>
        <taxon>Rodentia</taxon>
        <taxon>Myomorpha</taxon>
        <taxon>Muroidea</taxon>
        <taxon>Muridae</taxon>
        <taxon>Murinae</taxon>
        <taxon>Mus</taxon>
        <taxon>Mus</taxon>
    </lineage>
</organism>
<proteinExistence type="evidence at protein level"/>
<accession>Q91VN0</accession>
<accession>E9QQ75</accession>
<accession>O88883</accession>
<accession>Q9R208</accession>
<gene>
    <name evidence="12 14" type="primary">Lrp5</name>
    <name evidence="11" type="synonym">Lr3</name>
    <name evidence="11" type="synonym">Lrp7</name>
</gene>
<protein>
    <recommendedName>
        <fullName evidence="12">Low-density lipoprotein receptor-related protein 5</fullName>
        <shortName>LRP-5</shortName>
    </recommendedName>
    <alternativeName>
        <fullName evidence="11">Low-density lipoprotein receptor-related protein 7</fullName>
        <shortName>LRP-7</shortName>
    </alternativeName>
</protein>
<evidence type="ECO:0000250" key="1"/>
<evidence type="ECO:0000250" key="2">
    <source>
        <dbReference type="UniProtKB" id="O75197"/>
    </source>
</evidence>
<evidence type="ECO:0000255" key="3"/>
<evidence type="ECO:0000255" key="4">
    <source>
        <dbReference type="PROSITE-ProRule" id="PRU00124"/>
    </source>
</evidence>
<evidence type="ECO:0000256" key="5">
    <source>
        <dbReference type="SAM" id="MobiDB-lite"/>
    </source>
</evidence>
<evidence type="ECO:0000269" key="6">
    <source>
    </source>
</evidence>
<evidence type="ECO:0000269" key="7">
    <source>
    </source>
</evidence>
<evidence type="ECO:0000269" key="8">
    <source>
    </source>
</evidence>
<evidence type="ECO:0000269" key="9">
    <source>
    </source>
</evidence>
<evidence type="ECO:0000269" key="10">
    <source>
    </source>
</evidence>
<evidence type="ECO:0000303" key="11">
    <source>
    </source>
</evidence>
<evidence type="ECO:0000303" key="12">
    <source>
    </source>
</evidence>
<evidence type="ECO:0000305" key="13"/>
<evidence type="ECO:0000312" key="14">
    <source>
        <dbReference type="MGI" id="MGI:1278315"/>
    </source>
</evidence>
<keyword id="KW-0025">Alternative splicing</keyword>
<keyword id="KW-0217">Developmental protein</keyword>
<keyword id="KW-1015">Disulfide bond</keyword>
<keyword id="KW-0245">EGF-like domain</keyword>
<keyword id="KW-0254">Endocytosis</keyword>
<keyword id="KW-0256">Endoplasmic reticulum</keyword>
<keyword id="KW-0325">Glycoprotein</keyword>
<keyword id="KW-0472">Membrane</keyword>
<keyword id="KW-0597">Phosphoprotein</keyword>
<keyword id="KW-0675">Receptor</keyword>
<keyword id="KW-1185">Reference proteome</keyword>
<keyword id="KW-0677">Repeat</keyword>
<keyword id="KW-0732">Signal</keyword>
<keyword id="KW-0812">Transmembrane</keyword>
<keyword id="KW-1133">Transmembrane helix</keyword>
<keyword id="KW-0879">Wnt signaling pathway</keyword>
<feature type="signal peptide" evidence="3">
    <location>
        <begin position="1"/>
        <end position="30"/>
    </location>
</feature>
<feature type="chain" id="PRO_0000017329" description="Low-density lipoprotein receptor-related protein 5">
    <location>
        <begin position="31"/>
        <end position="1614"/>
    </location>
</feature>
<feature type="topological domain" description="Extracellular" evidence="3">
    <location>
        <begin position="31"/>
        <end position="1383"/>
    </location>
</feature>
<feature type="transmembrane region" description="Helical" evidence="3">
    <location>
        <begin position="1384"/>
        <end position="1406"/>
    </location>
</feature>
<feature type="topological domain" description="Cytoplasmic" evidence="3">
    <location>
        <begin position="1407"/>
        <end position="1614"/>
    </location>
</feature>
<feature type="repeat" description="LDL-receptor class B 1">
    <location>
        <begin position="74"/>
        <end position="118"/>
    </location>
</feature>
<feature type="repeat" description="LDL-receptor class B 2">
    <location>
        <begin position="119"/>
        <end position="161"/>
    </location>
</feature>
<feature type="repeat" description="LDL-receptor class B 3">
    <location>
        <begin position="162"/>
        <end position="205"/>
    </location>
</feature>
<feature type="repeat" description="LDL-receptor class B 4">
    <location>
        <begin position="206"/>
        <end position="246"/>
    </location>
</feature>
<feature type="repeat" description="LDL-receptor class B 5">
    <location>
        <begin position="247"/>
        <end position="289"/>
    </location>
</feature>
<feature type="domain" description="EGF-like 1">
    <location>
        <begin position="294"/>
        <end position="336"/>
    </location>
</feature>
<feature type="repeat" description="LDL-receptor class B 6">
    <location>
        <begin position="384"/>
        <end position="426"/>
    </location>
</feature>
<feature type="repeat" description="LDL-receptor class B 7">
    <location>
        <begin position="427"/>
        <end position="469"/>
    </location>
</feature>
<feature type="repeat" description="LDL-receptor class B 8">
    <location>
        <begin position="470"/>
        <end position="513"/>
    </location>
</feature>
<feature type="repeat" description="LDL-receptor class B 9">
    <location>
        <begin position="514"/>
        <end position="556"/>
    </location>
</feature>
<feature type="repeat" description="LDL-receptor class B 10">
    <location>
        <begin position="557"/>
        <end position="599"/>
    </location>
</feature>
<feature type="domain" description="EGF-like 2">
    <location>
        <begin position="600"/>
        <end position="640"/>
    </location>
</feature>
<feature type="repeat" description="LDL-receptor class B 11">
    <location>
        <begin position="686"/>
        <end position="728"/>
    </location>
</feature>
<feature type="repeat" description="LDL-receptor class B 12">
    <location>
        <begin position="729"/>
        <end position="771"/>
    </location>
</feature>
<feature type="repeat" description="LDL-receptor class B 13">
    <location>
        <begin position="772"/>
        <end position="814"/>
    </location>
</feature>
<feature type="repeat" description="LDL-receptor class B 14">
    <location>
        <begin position="815"/>
        <end position="854"/>
    </location>
</feature>
<feature type="repeat" description="LDL-receptor class B 15">
    <location>
        <begin position="855"/>
        <end position="897"/>
    </location>
</feature>
<feature type="domain" description="EGF-like 3">
    <location>
        <begin position="901"/>
        <end position="941"/>
    </location>
</feature>
<feature type="repeat" description="LDL-receptor class B 16">
    <location>
        <begin position="988"/>
        <end position="1034"/>
    </location>
</feature>
<feature type="repeat" description="LDL-receptor class B 17">
    <location>
        <begin position="1035"/>
        <end position="1077"/>
    </location>
</feature>
<feature type="repeat" description="LDL-receptor class B 18">
    <location>
        <begin position="1078"/>
        <end position="1122"/>
    </location>
</feature>
<feature type="repeat" description="LDL-receptor class B 19">
    <location>
        <begin position="1123"/>
        <end position="1164"/>
    </location>
</feature>
<feature type="repeat" description="LDL-receptor class B 20">
    <location>
        <begin position="1165"/>
        <end position="1206"/>
    </location>
</feature>
<feature type="domain" description="EGF-like 4">
    <location>
        <begin position="1212"/>
        <end position="1253"/>
    </location>
</feature>
<feature type="domain" description="LDL-receptor class A 1" evidence="4">
    <location>
        <begin position="1257"/>
        <end position="1295"/>
    </location>
</feature>
<feature type="domain" description="LDL-receptor class A 2" evidence="4">
    <location>
        <begin position="1296"/>
        <end position="1332"/>
    </location>
</feature>
<feature type="domain" description="LDL-receptor class A 3" evidence="4">
    <location>
        <begin position="1334"/>
        <end position="1370"/>
    </location>
</feature>
<feature type="region of interest" description="Beta-propeller 1">
    <location>
        <begin position="31"/>
        <end position="287"/>
    </location>
</feature>
<feature type="region of interest" description="Beta-propeller 2">
    <location>
        <begin position="340"/>
        <end position="601"/>
    </location>
</feature>
<feature type="region of interest" description="Beta-propeller 3">
    <location>
        <begin position="643"/>
        <end position="902"/>
    </location>
</feature>
<feature type="region of interest" description="Beta-propeller 4">
    <location>
        <begin position="944"/>
        <end position="1211"/>
    </location>
</feature>
<feature type="region of interest" description="Disordered" evidence="5">
    <location>
        <begin position="1002"/>
        <end position="1025"/>
    </location>
</feature>
<feature type="region of interest" description="Disordered" evidence="5">
    <location>
        <begin position="1474"/>
        <end position="1498"/>
    </location>
</feature>
<feature type="region of interest" description="Disordered" evidence="5">
    <location>
        <begin position="1567"/>
        <end position="1599"/>
    </location>
</feature>
<feature type="short sequence motif" description="PPPSP motif A">
    <location>
        <begin position="1499"/>
        <end position="1505"/>
    </location>
</feature>
<feature type="short sequence motif" description="PPPSP motif B">
    <location>
        <begin position="1537"/>
        <end position="1544"/>
    </location>
</feature>
<feature type="short sequence motif" description="PPPSP motif C">
    <location>
        <begin position="1573"/>
        <end position="1580"/>
    </location>
</feature>
<feature type="short sequence motif" description="PPPSP motif D">
    <location>
        <begin position="1590"/>
        <end position="1595"/>
    </location>
</feature>
<feature type="short sequence motif" description="PPPSP motif E">
    <location>
        <begin position="1604"/>
        <end position="1611"/>
    </location>
</feature>
<feature type="compositionally biased region" description="Polar residues" evidence="5">
    <location>
        <begin position="1007"/>
        <end position="1021"/>
    </location>
</feature>
<feature type="glycosylation site" description="N-linked (GlcNAc...) asparagine" evidence="3">
    <location>
        <position position="92"/>
    </location>
</feature>
<feature type="glycosylation site" description="N-linked (GlcNAc...) asparagine" evidence="3">
    <location>
        <position position="137"/>
    </location>
</feature>
<feature type="glycosylation site" description="N-linked (GlcNAc...) asparagine" evidence="3">
    <location>
        <position position="445"/>
    </location>
</feature>
<feature type="glycosylation site" description="N-linked (GlcNAc...) asparagine" evidence="3">
    <location>
        <position position="498"/>
    </location>
</feature>
<feature type="glycosylation site" description="N-linked (GlcNAc...) asparagine" evidence="3">
    <location>
        <position position="704"/>
    </location>
</feature>
<feature type="glycosylation site" description="N-linked (GlcNAc...) asparagine" evidence="3">
    <location>
        <position position="877"/>
    </location>
</feature>
<feature type="disulfide bond" evidence="4">
    <location>
        <begin position="298"/>
        <end position="309"/>
    </location>
</feature>
<feature type="disulfide bond" evidence="4">
    <location>
        <begin position="305"/>
        <end position="320"/>
    </location>
</feature>
<feature type="disulfide bond" evidence="4">
    <location>
        <begin position="322"/>
        <end position="335"/>
    </location>
</feature>
<feature type="disulfide bond" evidence="4">
    <location>
        <begin position="604"/>
        <end position="615"/>
    </location>
</feature>
<feature type="disulfide bond" evidence="4">
    <location>
        <begin position="611"/>
        <end position="624"/>
    </location>
</feature>
<feature type="disulfide bond" evidence="4">
    <location>
        <begin position="626"/>
        <end position="639"/>
    </location>
</feature>
<feature type="disulfide bond" evidence="4">
    <location>
        <begin position="905"/>
        <end position="916"/>
    </location>
</feature>
<feature type="disulfide bond" evidence="4">
    <location>
        <begin position="912"/>
        <end position="925"/>
    </location>
</feature>
<feature type="disulfide bond" evidence="4">
    <location>
        <begin position="927"/>
        <end position="940"/>
    </location>
</feature>
<feature type="disulfide bond" evidence="4">
    <location>
        <begin position="1216"/>
        <end position="1227"/>
    </location>
</feature>
<feature type="disulfide bond" evidence="4">
    <location>
        <begin position="1223"/>
        <end position="1237"/>
    </location>
</feature>
<feature type="disulfide bond" evidence="4">
    <location>
        <begin position="1239"/>
        <end position="1252"/>
    </location>
</feature>
<feature type="disulfide bond" evidence="4">
    <location>
        <begin position="1258"/>
        <end position="1272"/>
    </location>
</feature>
<feature type="disulfide bond" evidence="4">
    <location>
        <begin position="1265"/>
        <end position="1285"/>
    </location>
</feature>
<feature type="disulfide bond" evidence="4">
    <location>
        <begin position="1279"/>
        <end position="1294"/>
    </location>
</feature>
<feature type="disulfide bond" evidence="4">
    <location>
        <begin position="1297"/>
        <end position="1309"/>
    </location>
</feature>
<feature type="disulfide bond" evidence="4">
    <location>
        <begin position="1304"/>
        <end position="1322"/>
    </location>
</feature>
<feature type="disulfide bond" evidence="4">
    <location>
        <begin position="1316"/>
        <end position="1331"/>
    </location>
</feature>
<feature type="disulfide bond" evidence="4">
    <location>
        <begin position="1335"/>
        <end position="1347"/>
    </location>
</feature>
<feature type="disulfide bond" evidence="4">
    <location>
        <begin position="1342"/>
        <end position="1360"/>
    </location>
</feature>
<feature type="disulfide bond" evidence="4">
    <location>
        <begin position="1354"/>
        <end position="1369"/>
    </location>
</feature>
<feature type="sequence conflict" description="In Ref. 2; AAC70183." evidence="13" ref="2">
    <original>R</original>
    <variation>H</variation>
    <location>
        <position position="220"/>
    </location>
</feature>
<feature type="sequence conflict" description="In Ref. 4; AAH11374." evidence="13" ref="4">
    <original>I</original>
    <variation>S</variation>
    <location>
        <position position="1520"/>
    </location>
</feature>
<feature type="sequence conflict" description="In Ref. 1; AAC36468 and 2; AAC70183." evidence="13" ref="1 2">
    <original>T</original>
    <variation>I</variation>
    <location>
        <position position="1553"/>
    </location>
</feature>
<reference key="1">
    <citation type="journal article" date="1998" name="Gene">
        <title>Cloning of a novel member of the low-density lipoprotein receptor family.</title>
        <authorList>
            <person name="Hey P.J."/>
            <person name="Twells R.C.J."/>
            <person name="Phillips M.S."/>
            <person name="Nakagawa Y."/>
            <person name="Brown S.D."/>
            <person name="Kawaguchi Y."/>
            <person name="Cox R."/>
            <person name="Xie G."/>
            <person name="Dugan V."/>
            <person name="Hammond H."/>
            <person name="Metzker M.L."/>
            <person name="Todd J.A."/>
            <person name="Hess J.F."/>
        </authorList>
    </citation>
    <scope>NUCLEOTIDE SEQUENCE [MRNA] (ISOFORM 1)</scope>
    <source>
        <tissue>Liver</tissue>
    </source>
</reference>
<reference key="2">
    <citation type="journal article" date="1999" name="Genomics">
        <title>Molecular cloning of mouse Lrp7(Lr3) cDNA and chromosomal mapping of orthologous genes in mouse and human.</title>
        <authorList>
            <person name="Chen D."/>
            <person name="Lathrop W."/>
            <person name="Dong Y."/>
        </authorList>
    </citation>
    <scope>NUCLEOTIDE SEQUENCE [MRNA] (ISOFORM 1)</scope>
    <scope>ALTERNATIVE SPLICING</scope>
    <scope>TISSUE SPECIFICITY</scope>
    <source>
        <tissue>Liver</tissue>
    </source>
</reference>
<reference key="3">
    <citation type="journal article" date="2009" name="PLoS Biol.">
        <title>Lineage-specific biology revealed by a finished genome assembly of the mouse.</title>
        <authorList>
            <person name="Church D.M."/>
            <person name="Goodstadt L."/>
            <person name="Hillier L.W."/>
            <person name="Zody M.C."/>
            <person name="Goldstein S."/>
            <person name="She X."/>
            <person name="Bult C.J."/>
            <person name="Agarwala R."/>
            <person name="Cherry J.L."/>
            <person name="DiCuccio M."/>
            <person name="Hlavina W."/>
            <person name="Kapustin Y."/>
            <person name="Meric P."/>
            <person name="Maglott D."/>
            <person name="Birtle Z."/>
            <person name="Marques A.C."/>
            <person name="Graves T."/>
            <person name="Zhou S."/>
            <person name="Teague B."/>
            <person name="Potamousis K."/>
            <person name="Churas C."/>
            <person name="Place M."/>
            <person name="Herschleb J."/>
            <person name="Runnheim R."/>
            <person name="Forrest D."/>
            <person name="Amos-Landgraf J."/>
            <person name="Schwartz D.C."/>
            <person name="Cheng Z."/>
            <person name="Lindblad-Toh K."/>
            <person name="Eichler E.E."/>
            <person name="Ponting C.P."/>
        </authorList>
    </citation>
    <scope>NUCLEOTIDE SEQUENCE [LARGE SCALE GENOMIC DNA]</scope>
    <source>
        <strain>C57BL/6J</strain>
    </source>
</reference>
<reference key="4">
    <citation type="journal article" date="2004" name="Genome Res.">
        <title>The status, quality, and expansion of the NIH full-length cDNA project: the Mammalian Gene Collection (MGC).</title>
        <authorList>
            <consortium name="The MGC Project Team"/>
        </authorList>
    </citation>
    <scope>NUCLEOTIDE SEQUENCE [LARGE SCALE MRNA] (ISOFORM 1)</scope>
    <source>
        <tissue>Mammary tumor</tissue>
    </source>
</reference>
<reference key="5">
    <citation type="journal article" date="2001" name="Cell">
        <title>LDL receptor-related protein 5 (LRP5) affects bone accrual and eye development.</title>
        <authorList>
            <person name="Gong Y."/>
            <person name="Slee R.B."/>
            <person name="Fukai N."/>
            <person name="Rawadi G."/>
            <person name="Roman-Roman S."/>
            <person name="Reginato A.M."/>
            <person name="Wang H."/>
            <person name="Cundy T."/>
            <person name="Glorieux F.H."/>
            <person name="Lev D."/>
            <person name="Zacharin M."/>
            <person name="Oexle K."/>
            <person name="Marcelino J."/>
            <person name="Suwairi W."/>
            <person name="Heeger S."/>
            <person name="Sabatakos G."/>
            <person name="Apte S."/>
            <person name="Adkins W.N."/>
            <person name="Allgrove J."/>
            <person name="Arslan-Kirchner M."/>
            <person name="Batch J.A."/>
            <person name="Beighton P."/>
            <person name="Black G.C."/>
            <person name="Boles R.G."/>
            <person name="Boon L.M."/>
            <person name="Borrone C."/>
            <person name="Brunner H.G."/>
            <person name="Carle G.F."/>
            <person name="Dallapiccola B."/>
            <person name="De Paepe A."/>
            <person name="Floege B."/>
            <person name="Halfhide M.L."/>
            <person name="Hall B."/>
            <person name="Hennekam R.C.M."/>
            <person name="Hirose T."/>
            <person name="Jans A."/>
            <person name="Jueppner H."/>
            <person name="Kim C.A."/>
            <person name="Keppler-Noreuil K."/>
            <person name="Kohlschuetter A."/>
            <person name="LaCombe D."/>
            <person name="Lambert M."/>
            <person name="Lemyre E."/>
            <person name="Letteboer T."/>
            <person name="Peltonen L."/>
            <person name="Ramesar R.S."/>
            <person name="Romanengo M."/>
            <person name="Somer H."/>
            <person name="Steichen-Gersdorf E."/>
            <person name="Steinmann B."/>
            <person name="Sullivan B."/>
            <person name="Superti-Furga A."/>
            <person name="Swoboda W."/>
            <person name="van den Boogaard M.-J."/>
            <person name="Van Hul W."/>
            <person name="Vikkula M."/>
            <person name="Votruba M."/>
            <person name="Zabel B."/>
            <person name="Garcia T."/>
            <person name="Baron R."/>
            <person name="Olsen B.R."/>
            <person name="Warman M.L."/>
        </authorList>
    </citation>
    <scope>DEVELOPMENTAL STAGE</scope>
</reference>
<reference key="6">
    <citation type="journal article" date="2003" name="Cell">
        <title>Mesd encodes an LRP5/6 chaperone essential for specification of mouse embryonic polarity.</title>
        <authorList>
            <person name="Hsieh J.-C."/>
            <person name="Lee L."/>
            <person name="Zhang L."/>
            <person name="Wefer S."/>
            <person name="Brown K."/>
            <person name="DeRossi C."/>
            <person name="Wines M.E."/>
            <person name="Rosenquist T."/>
            <person name="Holdener B.C."/>
        </authorList>
    </citation>
    <scope>INTERACTION WITH MESD</scope>
    <scope>OLIGOMERIZATION</scope>
    <scope>SUBCELLULAR LOCATION</scope>
</reference>
<reference key="7">
    <citation type="journal article" date="2004" name="Development">
        <title>The Wnt co-receptors Lrp5 and Lrp6 are essential for gastrulation in mice.</title>
        <authorList>
            <person name="Kelly O.G."/>
            <person name="Pinson K.I."/>
            <person name="Skarnes W.C."/>
        </authorList>
    </citation>
    <scope>DISRUPTION PHENOTYPE</scope>
    <scope>FUNCTION</scope>
    <scope>DEVELOPMENTAL STAGE</scope>
</reference>
<reference key="8">
    <citation type="journal article" date="2002" name="J. Cell Biol.">
        <title>Cbfa1-independent decrease in osteoblast proliferation, osteopenia, and persistent embryonic eye vascularization in mice deficient in Lrp5, a Wnt coreceptor.</title>
        <authorList>
            <person name="Kato M."/>
            <person name="Patel M.S."/>
            <person name="Levasseur R."/>
            <person name="Lobov I."/>
            <person name="Chang B.H."/>
            <person name="Glass D.A. II"/>
            <person name="Hartmann C."/>
            <person name="Li L."/>
            <person name="Hwang T.H."/>
            <person name="Brayton C.F."/>
            <person name="Lang R.A."/>
            <person name="Karsenty G."/>
            <person name="Chan L."/>
        </authorList>
    </citation>
    <scope>DISRUPTION PHENOTYPE</scope>
    <scope>FUNCTION</scope>
    <scope>TISSUE SPECIFICITY</scope>
</reference>
<comment type="function">
    <text evidence="2 8 10">Acts as a coreceptor with members of the frizzled family of seven-transmembrane spanning receptors to transduce signal by Wnt proteins. Activates the canonical Wnt signaling pathway that controls cell fate determination and self-renewal during embryonic development and adult tissue regeneration (PubMed:11956231). In particular, may play an important role in the development of the posterior patterning of the epiblast during gastrulation (PubMed:15142971). During bone development, regulates osteoblast proliferation and differentiation thus determining bone mass (PubMed:11956231). Mechanistically, the formation of the signaling complex between Wnt ligand, frizzled receptor and LRP5 coreceptor promotes the recruitment of AXIN1 to LRP5, stabilizing beta-catenin/CTNNB1 and activating TCF/LEF-mediated transcriptional programs (By similarity). Acts as a coreceptor for non-Wnt proteins, such as norrin/NDP. Binding of norrin/NDP to frizzled 4/FZD4-LRP5 receptor complex triggers beta-catenin/CTNNB1-dependent signaling known to be required for retinal vascular development (By similarity). Plays a role in controlling postnatal vascular regression in retina via macrophage-induced endothelial cell apoptosis (PubMed:11956231).</text>
</comment>
<comment type="subunit">
    <text evidence="2 9">Homodimer; disulfide-linked. Forms phosphorylated oligomer aggregates on Wnt-signaling (PubMed:12581525). Component of a WNT-signaling complex that contains a WNT protein, a FZD protein and LRP5 or LRP6. Interacts with FZD8; the interaction is formed on WNT-binding and signaling. Interacts (via the phosphorylated PPPSP motif domains) with AXIN1; the interaction prevents inhibition of beta-catenin phosphorylation and signaling and is enhanced in the presence of GSK3B and WNT1 or WNT3A. Interacts (via beta-propeller regions 3 and 4) with DKK1; the interaction, enhanced by MESD and/or KREMEN, inhibits beta-catenin signaling by preventing GSK3-mediated phosphorylation of the PPPSP motifs and subsequent, AXIN1 binding. Interacts with CSNK1E. Interacts with SOST; the interaction antagonizes canonical Wnt signaling. Interacts with APCDD1 (By similarity). Interacts with MESD; the interaction prevents the formation of LRP5 aggregates, targets LRP5 to the plasma membrane and, when complexed with KREMEN2, increases DKK1 binding (PubMed:12581525). Interacts with CAPRIN2 (By similarity).</text>
</comment>
<comment type="subcellular location">
    <subcellularLocation>
        <location evidence="9">Membrane</location>
        <topology evidence="9">Single-pass type I membrane protein</topology>
    </subcellularLocation>
    <subcellularLocation>
        <location evidence="9">Endoplasmic reticulum</location>
    </subcellularLocation>
    <text evidence="1">Chaperoned to the plasma membrane by MESD.</text>
</comment>
<comment type="alternative products">
    <event type="alternative splicing"/>
    <isoform>
        <id>Q91VN0-1</id>
        <name>1</name>
        <sequence type="displayed"/>
    </isoform>
    <text>A number of isoforms are produced.</text>
</comment>
<comment type="tissue specificity">
    <text evidence="6 8">Widely expressed, with the highest expression levels in liver, heart, and lung and the lowest levels in brain and spleen.</text>
</comment>
<comment type="developmental stage">
    <text evidence="7 10">Expressed in early embryo throughout the ectoderm at 6.5 dpc and in visceral endoderm overlying the extraembryonic ectoderm at 7.5 dpc. Not present in the mesoderm nor in endoderm emerging from the primitive streak (PubMed:15142971). Expressed in differentiating osteoblasts that contribute to the lateral membranous part of clavicle at embryonic day 13.5. Expressed in osteoblasts lining the bony trabeculae of the humerus at embryonic day 16.5. Expressed in osteoblasts on both surfaces of the temporal bone at embryonic day 17.5 (PubMed:11719191).</text>
</comment>
<comment type="PTM">
    <text evidence="2">Phosphorylation of cytoplasmic PPPSP motifs regulates the signal transduction of the Wnt signaling pathway through acting as a docking site for AXIN1.</text>
</comment>
<comment type="disruption phenotype">
    <text evidence="8 10">Mice exhibit decreased osteoblast proliferation, developing low bone mass postnatally. Also display persistent embryonic eye vascularization due to a failure of macrophage-induced endothelial cell apoptosis. Mutant animals exhibit a loss of middle phalanx ossification at 18.5 dpc. LRP5 and LRP6 double null mutants are more severely affected. Embryos arrest prior to mid-gestation.</text>
</comment>
<comment type="similarity">
    <text evidence="13">Belongs to the LDLR family.</text>
</comment>